<reference key="1">
    <citation type="journal article" date="1993" name="J. Bacteriol.">
        <title>The cbb operons of the facultative chemoautotroph Alcaligenes eutrophus encode phosphoglycolate phosphatase.</title>
        <authorList>
            <person name="Schaeferjohann J."/>
            <person name="Yoo J.-G."/>
            <person name="Kusian B."/>
            <person name="Bowien B."/>
        </authorList>
    </citation>
    <scope>NUCLEOTIDE SEQUENCE [GENOMIC DNA]</scope>
    <scope>SUBUNIT</scope>
</reference>
<reference key="2">
    <citation type="journal article" date="2003" name="J. Mol. Biol.">
        <title>Complete nucleotide sequence of pHG1: a Ralstonia eutropha H16 megaplasmid encoding key enzymes of H(2)-based lithoautotrophy and anaerobiosis.</title>
        <authorList>
            <person name="Schwartz E."/>
            <person name="Henne A."/>
            <person name="Cramm R."/>
            <person name="Eitinger T."/>
            <person name="Friedrich B."/>
            <person name="Gottschalk G."/>
        </authorList>
    </citation>
    <scope>NUCLEOTIDE SEQUENCE [LARGE SCALE GENOMIC DNA]</scope>
    <source>
        <strain>ATCC 17699 / DSM 428 / KCTC 22496 / NCIMB 10442 / H16 / Stanier 337</strain>
    </source>
</reference>
<protein>
    <recommendedName>
        <fullName>Phosphoglycolate phosphatase, plasmid</fullName>
        <shortName>PGP</shortName>
        <shortName>PGPase</shortName>
        <ecNumber>3.1.3.18</ecNumber>
    </recommendedName>
</protein>
<geneLocation type="plasmid">
    <name>megaplasmid pHG1</name>
</geneLocation>
<sequence>MATVSLPCTAVLIDLDGTLVDCAPDIVEAANRMLADLGSPALPFGTVAGFIGRGVPNLVRRVLETAQLAPRVDATDAVAMFHRHYADTNGRLGSVFPGVEAGLAALRRQGYRLACVTNKPRALAVPLLALTGLSQYLEVLVAGDSIAQMKPDPEPLRHACNLLDVDAAQGVLVGDSAVDVAAARAAGIPVCLVRYGYAGPGGPAALGADALVDSLEALPALLTPARLAPAA</sequence>
<gene>
    <name type="primary">cbbZP</name>
    <name type="ordered locus">PHG419</name>
</gene>
<comment type="function">
    <text evidence="1">Specifically catalyzes the dephosphorylation of 2-phosphoglycolate. Is involved in the dissimilation of the intracellular 2-phosphoglycolate formed during the DNA repair of 3'-phosphoglycolate ends, a major class of DNA lesions induced by oxidative stress (By similarity).</text>
</comment>
<comment type="catalytic activity">
    <reaction>
        <text>2-phosphoglycolate + H2O = glycolate + phosphate</text>
        <dbReference type="Rhea" id="RHEA:14369"/>
        <dbReference type="ChEBI" id="CHEBI:15377"/>
        <dbReference type="ChEBI" id="CHEBI:29805"/>
        <dbReference type="ChEBI" id="CHEBI:43474"/>
        <dbReference type="ChEBI" id="CHEBI:58033"/>
        <dbReference type="EC" id="3.1.3.18"/>
    </reaction>
</comment>
<comment type="cofactor">
    <cofactor evidence="1">
        <name>Mg(2+)</name>
        <dbReference type="ChEBI" id="CHEBI:18420"/>
    </cofactor>
</comment>
<comment type="pathway">
    <text>Organic acid metabolism; glycolate biosynthesis; glycolate from 2-phosphoglycolate: step 1/1.</text>
</comment>
<comment type="subunit">
    <text evidence="3">Homotrimer.</text>
</comment>
<comment type="similarity">
    <text evidence="2">Belongs to the HAD-like hydrolase superfamily. CbbY/CbbZ/Gph/YieH family.</text>
</comment>
<keyword id="KW-0113">Calvin cycle</keyword>
<keyword id="KW-0119">Carbohydrate metabolism</keyword>
<keyword id="KW-0378">Hydrolase</keyword>
<keyword id="KW-0460">Magnesium</keyword>
<keyword id="KW-0479">Metal-binding</keyword>
<keyword id="KW-0614">Plasmid</keyword>
<keyword id="KW-1185">Reference proteome</keyword>
<proteinExistence type="evidence at protein level"/>
<accession>P40853</accession>
<accession>Q7WWS5</accession>
<organism>
    <name type="scientific">Cupriavidus necator (strain ATCC 17699 / DSM 428 / KCTC 22496 / NCIMB 10442 / H16 / Stanier 337)</name>
    <name type="common">Ralstonia eutropha</name>
    <dbReference type="NCBI Taxonomy" id="381666"/>
    <lineage>
        <taxon>Bacteria</taxon>
        <taxon>Pseudomonadati</taxon>
        <taxon>Pseudomonadota</taxon>
        <taxon>Betaproteobacteria</taxon>
        <taxon>Burkholderiales</taxon>
        <taxon>Burkholderiaceae</taxon>
        <taxon>Cupriavidus</taxon>
    </lineage>
</organism>
<name>GPHP_CUPNH</name>
<feature type="chain" id="PRO_0000108024" description="Phosphoglycolate phosphatase, plasmid">
    <location>
        <begin position="1"/>
        <end position="231"/>
    </location>
</feature>
<feature type="active site" description="Nucleophile" evidence="1">
    <location>
        <position position="14"/>
    </location>
</feature>
<feature type="binding site" evidence="1">
    <location>
        <position position="14"/>
    </location>
    <ligand>
        <name>Mg(2+)</name>
        <dbReference type="ChEBI" id="CHEBI:18420"/>
    </ligand>
</feature>
<feature type="binding site" evidence="1">
    <location>
        <position position="16"/>
    </location>
    <ligand>
        <name>Mg(2+)</name>
        <dbReference type="ChEBI" id="CHEBI:18420"/>
    </ligand>
</feature>
<feature type="binding site" evidence="1">
    <location>
        <position position="175"/>
    </location>
    <ligand>
        <name>Mg(2+)</name>
        <dbReference type="ChEBI" id="CHEBI:18420"/>
    </ligand>
</feature>
<feature type="sequence conflict" description="In Ref. 1; AAA20195." evidence="2" ref="1">
    <original>R</original>
    <variation>Q</variation>
    <location>
        <position position="157"/>
    </location>
</feature>
<evidence type="ECO:0000250" key="1"/>
<evidence type="ECO:0000305" key="2"/>
<evidence type="ECO:0000305" key="3">
    <source>
    </source>
</evidence>
<dbReference type="EC" id="3.1.3.18"/>
<dbReference type="EMBL" id="M68905">
    <property type="protein sequence ID" value="AAA20195.1"/>
    <property type="molecule type" value="Unassigned_DNA"/>
</dbReference>
<dbReference type="EMBL" id="AY305378">
    <property type="protein sequence ID" value="AAP86168.1"/>
    <property type="molecule type" value="Genomic_DNA"/>
</dbReference>
<dbReference type="PIR" id="D49934">
    <property type="entry name" value="D49934"/>
</dbReference>
<dbReference type="RefSeq" id="WP_011154331.1">
    <property type="nucleotide sequence ID" value="NC_005241.1"/>
</dbReference>
<dbReference type="SMR" id="P40853"/>
<dbReference type="KEGG" id="reh:PHG419"/>
<dbReference type="PATRIC" id="fig|381666.6.peg.347"/>
<dbReference type="eggNOG" id="COG0546">
    <property type="taxonomic scope" value="Bacteria"/>
</dbReference>
<dbReference type="HOGENOM" id="CLU_045011_19_1_4"/>
<dbReference type="OrthoDB" id="9807630at2"/>
<dbReference type="UniPathway" id="UPA00865">
    <property type="reaction ID" value="UER00834"/>
</dbReference>
<dbReference type="Proteomes" id="UP000008210">
    <property type="component" value="Plasmid megaplasmid pHG1"/>
</dbReference>
<dbReference type="GO" id="GO:0005829">
    <property type="term" value="C:cytosol"/>
    <property type="evidence" value="ECO:0007669"/>
    <property type="project" value="TreeGrafter"/>
</dbReference>
<dbReference type="GO" id="GO:0046872">
    <property type="term" value="F:metal ion binding"/>
    <property type="evidence" value="ECO:0007669"/>
    <property type="project" value="UniProtKB-KW"/>
</dbReference>
<dbReference type="GO" id="GO:0008967">
    <property type="term" value="F:phosphoglycolate phosphatase activity"/>
    <property type="evidence" value="ECO:0007669"/>
    <property type="project" value="UniProtKB-UniRule"/>
</dbReference>
<dbReference type="GO" id="GO:0006281">
    <property type="term" value="P:DNA repair"/>
    <property type="evidence" value="ECO:0007669"/>
    <property type="project" value="TreeGrafter"/>
</dbReference>
<dbReference type="GO" id="GO:0046295">
    <property type="term" value="P:glycolate biosynthetic process"/>
    <property type="evidence" value="ECO:0007669"/>
    <property type="project" value="UniProtKB-UniRule"/>
</dbReference>
<dbReference type="GO" id="GO:0019253">
    <property type="term" value="P:reductive pentose-phosphate cycle"/>
    <property type="evidence" value="ECO:0007669"/>
    <property type="project" value="UniProtKB-KW"/>
</dbReference>
<dbReference type="FunFam" id="3.40.50.1000:FF:000022">
    <property type="entry name" value="Phosphoglycolate phosphatase"/>
    <property type="match status" value="1"/>
</dbReference>
<dbReference type="Gene3D" id="3.40.50.1000">
    <property type="entry name" value="HAD superfamily/HAD-like"/>
    <property type="match status" value="1"/>
</dbReference>
<dbReference type="Gene3D" id="1.10.150.240">
    <property type="entry name" value="Putative phosphatase, domain 2"/>
    <property type="match status" value="1"/>
</dbReference>
<dbReference type="HAMAP" id="MF_00495">
    <property type="entry name" value="GPH_hydrolase_bact"/>
    <property type="match status" value="1"/>
</dbReference>
<dbReference type="InterPro" id="IPR050155">
    <property type="entry name" value="HAD-like_hydrolase_sf"/>
</dbReference>
<dbReference type="InterPro" id="IPR036412">
    <property type="entry name" value="HAD-like_sf"/>
</dbReference>
<dbReference type="InterPro" id="IPR006439">
    <property type="entry name" value="HAD-SF_hydro_IA"/>
</dbReference>
<dbReference type="InterPro" id="IPR041492">
    <property type="entry name" value="HAD_2"/>
</dbReference>
<dbReference type="InterPro" id="IPR023214">
    <property type="entry name" value="HAD_sf"/>
</dbReference>
<dbReference type="InterPro" id="IPR023198">
    <property type="entry name" value="PGP-like_dom2"/>
</dbReference>
<dbReference type="InterPro" id="IPR037512">
    <property type="entry name" value="PGPase_prok"/>
</dbReference>
<dbReference type="NCBIfam" id="TIGR01549">
    <property type="entry name" value="HAD-SF-IA-v1"/>
    <property type="match status" value="1"/>
</dbReference>
<dbReference type="NCBIfam" id="TIGR01509">
    <property type="entry name" value="HAD-SF-IA-v3"/>
    <property type="match status" value="1"/>
</dbReference>
<dbReference type="NCBIfam" id="TIGR01449">
    <property type="entry name" value="PGP_bact"/>
    <property type="match status" value="1"/>
</dbReference>
<dbReference type="PANTHER" id="PTHR43434">
    <property type="entry name" value="PHOSPHOGLYCOLATE PHOSPHATASE"/>
    <property type="match status" value="1"/>
</dbReference>
<dbReference type="PANTHER" id="PTHR43434:SF1">
    <property type="entry name" value="PHOSPHOGLYCOLATE PHOSPHATASE"/>
    <property type="match status" value="1"/>
</dbReference>
<dbReference type="Pfam" id="PF13419">
    <property type="entry name" value="HAD_2"/>
    <property type="match status" value="1"/>
</dbReference>
<dbReference type="PRINTS" id="PR00413">
    <property type="entry name" value="HADHALOGNASE"/>
</dbReference>
<dbReference type="SFLD" id="SFLDG01135">
    <property type="entry name" value="C1.5.6:_HAD__Beta-PGM__Phospha"/>
    <property type="match status" value="1"/>
</dbReference>
<dbReference type="SFLD" id="SFLDG01129">
    <property type="entry name" value="C1.5:_HAD__Beta-PGM__Phosphata"/>
    <property type="match status" value="1"/>
</dbReference>
<dbReference type="SUPFAM" id="SSF56784">
    <property type="entry name" value="HAD-like"/>
    <property type="match status" value="1"/>
</dbReference>